<keyword id="KW-0687">Ribonucleoprotein</keyword>
<keyword id="KW-0689">Ribosomal protein</keyword>
<keyword id="KW-0694">RNA-binding</keyword>
<keyword id="KW-0699">rRNA-binding</keyword>
<dbReference type="EMBL" id="CP001172">
    <property type="protein sequence ID" value="ACJ58386.1"/>
    <property type="molecule type" value="Genomic_DNA"/>
</dbReference>
<dbReference type="RefSeq" id="WP_000091932.1">
    <property type="nucleotide sequence ID" value="NZ_CP001172.1"/>
</dbReference>
<dbReference type="SMR" id="B7GW17"/>
<dbReference type="GeneID" id="92895302"/>
<dbReference type="HOGENOM" id="CLU_065464_1_2_6"/>
<dbReference type="Proteomes" id="UP000006924">
    <property type="component" value="Chromosome"/>
</dbReference>
<dbReference type="GO" id="GO:0022625">
    <property type="term" value="C:cytosolic large ribosomal subunit"/>
    <property type="evidence" value="ECO:0007669"/>
    <property type="project" value="TreeGrafter"/>
</dbReference>
<dbReference type="GO" id="GO:0019843">
    <property type="term" value="F:rRNA binding"/>
    <property type="evidence" value="ECO:0007669"/>
    <property type="project" value="UniProtKB-UniRule"/>
</dbReference>
<dbReference type="GO" id="GO:0003735">
    <property type="term" value="F:structural constituent of ribosome"/>
    <property type="evidence" value="ECO:0007669"/>
    <property type="project" value="InterPro"/>
</dbReference>
<dbReference type="GO" id="GO:0002181">
    <property type="term" value="P:cytoplasmic translation"/>
    <property type="evidence" value="ECO:0007669"/>
    <property type="project" value="TreeGrafter"/>
</dbReference>
<dbReference type="FunFam" id="3.90.930.12:FF:000001">
    <property type="entry name" value="50S ribosomal protein L6"/>
    <property type="match status" value="1"/>
</dbReference>
<dbReference type="FunFam" id="3.90.930.12:FF:000002">
    <property type="entry name" value="50S ribosomal protein L6"/>
    <property type="match status" value="1"/>
</dbReference>
<dbReference type="Gene3D" id="3.90.930.12">
    <property type="entry name" value="Ribosomal protein L6, alpha-beta domain"/>
    <property type="match status" value="2"/>
</dbReference>
<dbReference type="HAMAP" id="MF_01365_B">
    <property type="entry name" value="Ribosomal_uL6_B"/>
    <property type="match status" value="1"/>
</dbReference>
<dbReference type="InterPro" id="IPR000702">
    <property type="entry name" value="Ribosomal_uL6-like"/>
</dbReference>
<dbReference type="InterPro" id="IPR036789">
    <property type="entry name" value="Ribosomal_uL6-like_a/b-dom_sf"/>
</dbReference>
<dbReference type="InterPro" id="IPR020040">
    <property type="entry name" value="Ribosomal_uL6_a/b-dom"/>
</dbReference>
<dbReference type="InterPro" id="IPR019906">
    <property type="entry name" value="Ribosomal_uL6_bac-type"/>
</dbReference>
<dbReference type="InterPro" id="IPR002358">
    <property type="entry name" value="Ribosomal_uL6_CS"/>
</dbReference>
<dbReference type="NCBIfam" id="TIGR03654">
    <property type="entry name" value="L6_bact"/>
    <property type="match status" value="1"/>
</dbReference>
<dbReference type="PANTHER" id="PTHR11655">
    <property type="entry name" value="60S/50S RIBOSOMAL PROTEIN L6/L9"/>
    <property type="match status" value="1"/>
</dbReference>
<dbReference type="PANTHER" id="PTHR11655:SF14">
    <property type="entry name" value="LARGE RIBOSOMAL SUBUNIT PROTEIN UL6M"/>
    <property type="match status" value="1"/>
</dbReference>
<dbReference type="Pfam" id="PF00347">
    <property type="entry name" value="Ribosomal_L6"/>
    <property type="match status" value="2"/>
</dbReference>
<dbReference type="PIRSF" id="PIRSF002162">
    <property type="entry name" value="Ribosomal_L6"/>
    <property type="match status" value="1"/>
</dbReference>
<dbReference type="PRINTS" id="PR00059">
    <property type="entry name" value="RIBOSOMALL6"/>
</dbReference>
<dbReference type="SUPFAM" id="SSF56053">
    <property type="entry name" value="Ribosomal protein L6"/>
    <property type="match status" value="2"/>
</dbReference>
<dbReference type="PROSITE" id="PS00525">
    <property type="entry name" value="RIBOSOMAL_L6_1"/>
    <property type="match status" value="1"/>
</dbReference>
<protein>
    <recommendedName>
        <fullName evidence="1">Large ribosomal subunit protein uL6</fullName>
    </recommendedName>
    <alternativeName>
        <fullName evidence="2">50S ribosomal protein L6</fullName>
    </alternativeName>
</protein>
<proteinExistence type="inferred from homology"/>
<feature type="chain" id="PRO_1000143929" description="Large ribosomal subunit protein uL6">
    <location>
        <begin position="1"/>
        <end position="177"/>
    </location>
</feature>
<comment type="function">
    <text evidence="1">This protein binds to the 23S rRNA, and is important in its secondary structure. It is located near the subunit interface in the base of the L7/L12 stalk, and near the tRNA binding site of the peptidyltransferase center.</text>
</comment>
<comment type="subunit">
    <text evidence="1">Part of the 50S ribosomal subunit.</text>
</comment>
<comment type="similarity">
    <text evidence="1">Belongs to the universal ribosomal protein uL6 family.</text>
</comment>
<sequence length="177" mass="19097">MSRVAKAPVTVPNGVTVTQNGRQVEVKGSKGTLSFNLHALVELKQEEGKLQLAPAKESKDAWMQAGTARAVLNNLVKGVSEGFERKLQLVGVGYKAAVKGTVVNLNLGYSHPIDYALPEGVTAETPTATEIILKSANKQLLGQVAAEIRAYRSPEPYKGKGVRYSDEVILRKEAKKK</sequence>
<name>RL6_ACIB3</name>
<accession>B7GW17</accession>
<reference key="1">
    <citation type="journal article" date="2008" name="J. Bacteriol.">
        <title>Comparative genome sequence analysis of multidrug-resistant Acinetobacter baumannii.</title>
        <authorList>
            <person name="Adams M.D."/>
            <person name="Goglin K."/>
            <person name="Molyneaux N."/>
            <person name="Hujer K.M."/>
            <person name="Lavender H."/>
            <person name="Jamison J.J."/>
            <person name="MacDonald I.J."/>
            <person name="Martin K.M."/>
            <person name="Russo T."/>
            <person name="Campagnari A.A."/>
            <person name="Hujer A.M."/>
            <person name="Bonomo R.A."/>
            <person name="Gill S.R."/>
        </authorList>
    </citation>
    <scope>NUCLEOTIDE SEQUENCE [LARGE SCALE GENOMIC DNA]</scope>
    <source>
        <strain>AB307-0294</strain>
    </source>
</reference>
<organism>
    <name type="scientific">Acinetobacter baumannii (strain AB307-0294)</name>
    <dbReference type="NCBI Taxonomy" id="557600"/>
    <lineage>
        <taxon>Bacteria</taxon>
        <taxon>Pseudomonadati</taxon>
        <taxon>Pseudomonadota</taxon>
        <taxon>Gammaproteobacteria</taxon>
        <taxon>Moraxellales</taxon>
        <taxon>Moraxellaceae</taxon>
        <taxon>Acinetobacter</taxon>
        <taxon>Acinetobacter calcoaceticus/baumannii complex</taxon>
    </lineage>
</organism>
<gene>
    <name evidence="1" type="primary">rplF</name>
    <name type="ordered locus">ABBFA_000447</name>
</gene>
<evidence type="ECO:0000255" key="1">
    <source>
        <dbReference type="HAMAP-Rule" id="MF_01365"/>
    </source>
</evidence>
<evidence type="ECO:0000305" key="2"/>